<dbReference type="EC" id="3.4.11.-"/>
<dbReference type="EMBL" id="D13386">
    <property type="protein sequence ID" value="BAA02654.1"/>
    <property type="molecule type" value="Genomic_DNA"/>
</dbReference>
<dbReference type="EMBL" id="AP008226">
    <property type="protein sequence ID" value="BAD70975.1"/>
    <property type="molecule type" value="Genomic_DNA"/>
</dbReference>
<dbReference type="RefSeq" id="WP_011173220.1">
    <property type="nucleotide sequence ID" value="NC_006461.1"/>
</dbReference>
<dbReference type="RefSeq" id="YP_144418.1">
    <property type="nucleotide sequence ID" value="NC_006461.1"/>
</dbReference>
<dbReference type="PDB" id="2AYI">
    <property type="method" value="X-ray"/>
    <property type="resolution" value="3.70 A"/>
    <property type="chains" value="A/B/C/D/E=1-408"/>
</dbReference>
<dbReference type="PDBsum" id="2AYI"/>
<dbReference type="SMR" id="P42778"/>
<dbReference type="MEROPS" id="M29.001"/>
<dbReference type="EnsemblBacteria" id="BAD70975">
    <property type="protein sequence ID" value="BAD70975"/>
    <property type="gene ID" value="BAD70975"/>
</dbReference>
<dbReference type="GeneID" id="3170035"/>
<dbReference type="KEGG" id="ttj:TTHA1152"/>
<dbReference type="PATRIC" id="fig|300852.9.peg.1132"/>
<dbReference type="eggNOG" id="COG2309">
    <property type="taxonomic scope" value="Bacteria"/>
</dbReference>
<dbReference type="HOGENOM" id="CLU_054346_1_0_0"/>
<dbReference type="PhylomeDB" id="P42778"/>
<dbReference type="EvolutionaryTrace" id="P42778"/>
<dbReference type="Proteomes" id="UP000000532">
    <property type="component" value="Chromosome"/>
</dbReference>
<dbReference type="GO" id="GO:0004177">
    <property type="term" value="F:aminopeptidase activity"/>
    <property type="evidence" value="ECO:0007669"/>
    <property type="project" value="UniProtKB-KW"/>
</dbReference>
<dbReference type="GO" id="GO:0046872">
    <property type="term" value="F:metal ion binding"/>
    <property type="evidence" value="ECO:0007669"/>
    <property type="project" value="UniProtKB-KW"/>
</dbReference>
<dbReference type="GO" id="GO:0008237">
    <property type="term" value="F:metallopeptidase activity"/>
    <property type="evidence" value="ECO:0007669"/>
    <property type="project" value="UniProtKB-KW"/>
</dbReference>
<dbReference type="GO" id="GO:0006508">
    <property type="term" value="P:proteolysis"/>
    <property type="evidence" value="ECO:0007669"/>
    <property type="project" value="UniProtKB-KW"/>
</dbReference>
<dbReference type="Gene3D" id="3.40.1830.10">
    <property type="entry name" value="Thermophilic metalloprotease (M29)"/>
    <property type="match status" value="1"/>
</dbReference>
<dbReference type="InterPro" id="IPR052170">
    <property type="entry name" value="M29_Exopeptidase"/>
</dbReference>
<dbReference type="InterPro" id="IPR035097">
    <property type="entry name" value="M29_N-terminal"/>
</dbReference>
<dbReference type="InterPro" id="IPR000787">
    <property type="entry name" value="Peptidase_M29"/>
</dbReference>
<dbReference type="PANTHER" id="PTHR34448">
    <property type="entry name" value="AMINOPEPTIDASE"/>
    <property type="match status" value="1"/>
</dbReference>
<dbReference type="PANTHER" id="PTHR34448:SF3">
    <property type="entry name" value="AMINOPEPTIDASE AMPS"/>
    <property type="match status" value="1"/>
</dbReference>
<dbReference type="Pfam" id="PF02073">
    <property type="entry name" value="Peptidase_M29"/>
    <property type="match status" value="1"/>
</dbReference>
<dbReference type="PRINTS" id="PR00919">
    <property type="entry name" value="THERMOPTASE"/>
</dbReference>
<dbReference type="SUPFAM" id="SSF144052">
    <property type="entry name" value="Thermophilic metalloprotease-like"/>
    <property type="match status" value="1"/>
</dbReference>
<comment type="function">
    <text evidence="1">Metal-dependent exopeptidase.</text>
</comment>
<comment type="cofactor">
    <cofactor evidence="1">
        <name>Co(2+)</name>
        <dbReference type="ChEBI" id="CHEBI:48828"/>
    </cofactor>
    <cofactor evidence="1">
        <name>Zn(2+)</name>
        <dbReference type="ChEBI" id="CHEBI:29105"/>
    </cofactor>
    <cofactor evidence="1">
        <name>Mg(2+)</name>
        <dbReference type="ChEBI" id="CHEBI:18420"/>
    </cofactor>
    <text evidence="1">Binds 2 divalent metal cations per subunit. Can use cobalt, zinc, and possibly also magnesium ions.</text>
</comment>
<comment type="subunit">
    <text evidence="1">Homodimer.</text>
</comment>
<comment type="similarity">
    <text evidence="2">Belongs to the peptidase M29 family.</text>
</comment>
<organism>
    <name type="scientific">Thermus thermophilus (strain ATCC 27634 / DSM 579 / HB8)</name>
    <dbReference type="NCBI Taxonomy" id="300852"/>
    <lineage>
        <taxon>Bacteria</taxon>
        <taxon>Thermotogati</taxon>
        <taxon>Deinococcota</taxon>
        <taxon>Deinococci</taxon>
        <taxon>Thermales</taxon>
        <taxon>Thermaceae</taxon>
        <taxon>Thermus</taxon>
    </lineage>
</organism>
<sequence>MDAFKRNLEKLAELAIRVGLNLEKGQEVIATAPIEAVDFVRLLAEKAYREGASLFTVIYGDQELARKRLALAPEEGLDKAPAWLYEGMARAFREGAARLAVSGSDPKALEGLPPEKVGRAQKANARAYKPALEAITEFVTNWTIVPFAHPGWARAVFPGLPEEEAVRRLWEAIFQATRADQEDPIAAWEAHNRALHEKVAYLNARRFHALHFKGPGTDLVVGLAEGHLWQGGATATKGGRLCNPNLPTEEVFTAPHRERVEGVVRASRPLALGGTLVEGIFARFERGFAVEVRAEKGEEVLRRLLDTDEGARRLGEVALVPADNPIAKTGLVFFDTLFDENAASHIAFGQAYQENLEGRPSGEAFRKRGGNESLVHVDWMIGSEEMDVDGLYEDGTRTPLMRRGRWVV</sequence>
<name>AMPT_THET8</name>
<keyword id="KW-0002">3D-structure</keyword>
<keyword id="KW-0031">Aminopeptidase</keyword>
<keyword id="KW-0170">Cobalt</keyword>
<keyword id="KW-0378">Hydrolase</keyword>
<keyword id="KW-0479">Metal-binding</keyword>
<keyword id="KW-0482">Metalloprotease</keyword>
<keyword id="KW-0645">Protease</keyword>
<keyword id="KW-1185">Reference proteome</keyword>
<keyword id="KW-0862">Zinc</keyword>
<gene>
    <name type="ordered locus">TTHA1152</name>
</gene>
<reference key="1">
    <citation type="journal article" date="1997" name="Biosci. Biotechnol. Biochem.">
        <title>Cloning of genes of the aminopeptidase T family from Thermus thermophilus HB8 and Bacillus stearothermophilus NCIB8924: apparent similarity to the leucyl aminopeptidase family.</title>
        <authorList>
            <person name="Motoshima H."/>
            <person name="Minagawa E."/>
            <person name="Tsukasaki F."/>
            <person name="Kaminogawa S."/>
        </authorList>
    </citation>
    <scope>NUCLEOTIDE SEQUENCE [GENOMIC DNA]</scope>
</reference>
<reference key="2">
    <citation type="submission" date="2004-11" db="EMBL/GenBank/DDBJ databases">
        <title>Complete genome sequence of Thermus thermophilus HB8.</title>
        <authorList>
            <person name="Masui R."/>
            <person name="Kurokawa K."/>
            <person name="Nakagawa N."/>
            <person name="Tokunaga F."/>
            <person name="Koyama Y."/>
            <person name="Shibata T."/>
            <person name="Oshima T."/>
            <person name="Yokoyama S."/>
            <person name="Yasunaga T."/>
            <person name="Kuramitsu S."/>
        </authorList>
    </citation>
    <scope>NUCLEOTIDE SEQUENCE [LARGE SCALE GENOMIC DNA]</scope>
    <source>
        <strain>ATCC 27634 / DSM 579 / HB8</strain>
    </source>
</reference>
<reference key="3">
    <citation type="journal article" date="2005" name="J. Mol. Biol.">
        <title>Substrate access to the active sites in aminopeptidase T, a representative of a new metallopeptidase clan.</title>
        <authorList>
            <person name="Odintsov S.G."/>
            <person name="Sabala I."/>
            <person name="Bourenkov G."/>
            <person name="Rybin V."/>
            <person name="Bochtler M."/>
        </authorList>
    </citation>
    <scope>X-RAY CRYSTALLOGRAPHY (3.7 ANGSTROMS) IN COMPLEX WITH ZINC IONS</scope>
    <scope>CATALYTIC ACTIVITY</scope>
    <scope>FUNCTION</scope>
    <scope>COFACTOR</scope>
    <scope>SUBUNIT</scope>
</reference>
<evidence type="ECO:0000269" key="1">
    <source>
    </source>
</evidence>
<evidence type="ECO:0000305" key="2"/>
<evidence type="ECO:0000305" key="3">
    <source>
    </source>
</evidence>
<protein>
    <recommendedName>
        <fullName>Aminopeptidase T</fullName>
        <shortName>AP-T</shortName>
        <ecNumber>3.4.11.-</ecNumber>
    </recommendedName>
    <alternativeName>
        <fullName>Heat-stable aminopeptidase</fullName>
    </alternativeName>
</protein>
<feature type="chain" id="PRO_0000079176" description="Aminopeptidase T">
    <location>
        <begin position="1"/>
        <end position="408"/>
    </location>
</feature>
<feature type="binding site" evidence="3">
    <location>
        <position position="250"/>
    </location>
    <ligand>
        <name>a divalent metal cation</name>
        <dbReference type="ChEBI" id="CHEBI:60240"/>
        <label>1</label>
    </ligand>
</feature>
<feature type="binding site" evidence="3">
    <location>
        <position position="316"/>
    </location>
    <ligand>
        <name>a divalent metal cation</name>
        <dbReference type="ChEBI" id="CHEBI:60240"/>
        <label>1</label>
    </ligand>
</feature>
<feature type="binding site" evidence="3">
    <location>
        <position position="316"/>
    </location>
    <ligand>
        <name>a divalent metal cation</name>
        <dbReference type="ChEBI" id="CHEBI:60240"/>
        <label>2</label>
    </ligand>
</feature>
<feature type="binding site" evidence="3">
    <location>
        <position position="340"/>
    </location>
    <ligand>
        <name>a divalent metal cation</name>
        <dbReference type="ChEBI" id="CHEBI:60240"/>
        <label>1</label>
    </ligand>
</feature>
<feature type="binding site" evidence="3">
    <location>
        <position position="340"/>
    </location>
    <ligand>
        <name>a divalent metal cation</name>
        <dbReference type="ChEBI" id="CHEBI:60240"/>
        <label>2</label>
    </ligand>
</feature>
<feature type="binding site" evidence="3">
    <location>
        <position position="345"/>
    </location>
    <ligand>
        <name>a divalent metal cation</name>
        <dbReference type="ChEBI" id="CHEBI:60240"/>
        <label>1</label>
    </ligand>
</feature>
<feature type="binding site" evidence="3">
    <location>
        <position position="376"/>
    </location>
    <ligand>
        <name>a divalent metal cation</name>
        <dbReference type="ChEBI" id="CHEBI:60240"/>
        <label>2</label>
    </ligand>
</feature>
<feature type="binding site" evidence="3">
    <location>
        <position position="378"/>
    </location>
    <ligand>
        <name>a divalent metal cation</name>
        <dbReference type="ChEBI" id="CHEBI:60240"/>
        <label>2</label>
    </ligand>
</feature>
<proteinExistence type="evidence at protein level"/>
<accession>P42778</accession>
<accession>Q5SJ62</accession>